<feature type="chain" id="PRO_0000166780" description="Alkyl hydroperoxide reductase subunit F">
    <location>
        <begin position="1"/>
        <end position="507"/>
    </location>
</feature>
<feature type="binding site" evidence="1">
    <location>
        <begin position="207"/>
        <end position="222"/>
    </location>
    <ligand>
        <name>FAD</name>
        <dbReference type="ChEBI" id="CHEBI:57692"/>
    </ligand>
</feature>
<feature type="binding site" evidence="1">
    <location>
        <begin position="347"/>
        <end position="361"/>
    </location>
    <ligand>
        <name>NAD(+)</name>
        <dbReference type="ChEBI" id="CHEBI:57540"/>
    </ligand>
</feature>
<feature type="binding site" evidence="1">
    <location>
        <begin position="467"/>
        <end position="477"/>
    </location>
    <ligand>
        <name>FAD</name>
        <dbReference type="ChEBI" id="CHEBI:57692"/>
    </ligand>
</feature>
<feature type="disulfide bond" description="Redox-active" evidence="1">
    <location>
        <begin position="335"/>
        <end position="338"/>
    </location>
</feature>
<organism>
    <name type="scientific">Staphylococcus aureus (strain N315)</name>
    <dbReference type="NCBI Taxonomy" id="158879"/>
    <lineage>
        <taxon>Bacteria</taxon>
        <taxon>Bacillati</taxon>
        <taxon>Bacillota</taxon>
        <taxon>Bacilli</taxon>
        <taxon>Bacillales</taxon>
        <taxon>Staphylococcaceae</taxon>
        <taxon>Staphylococcus</taxon>
    </lineage>
</organism>
<reference key="1">
    <citation type="journal article" date="2001" name="Lancet">
        <title>Whole genome sequencing of meticillin-resistant Staphylococcus aureus.</title>
        <authorList>
            <person name="Kuroda M."/>
            <person name="Ohta T."/>
            <person name="Uchiyama I."/>
            <person name="Baba T."/>
            <person name="Yuzawa H."/>
            <person name="Kobayashi I."/>
            <person name="Cui L."/>
            <person name="Oguchi A."/>
            <person name="Aoki K."/>
            <person name="Nagai Y."/>
            <person name="Lian J.-Q."/>
            <person name="Ito T."/>
            <person name="Kanamori M."/>
            <person name="Matsumaru H."/>
            <person name="Maruyama A."/>
            <person name="Murakami H."/>
            <person name="Hosoyama A."/>
            <person name="Mizutani-Ui Y."/>
            <person name="Takahashi N.K."/>
            <person name="Sawano T."/>
            <person name="Inoue R."/>
            <person name="Kaito C."/>
            <person name="Sekimizu K."/>
            <person name="Hirakawa H."/>
            <person name="Kuhara S."/>
            <person name="Goto S."/>
            <person name="Yabuzaki J."/>
            <person name="Kanehisa M."/>
            <person name="Yamashita A."/>
            <person name="Oshima K."/>
            <person name="Furuya K."/>
            <person name="Yoshino C."/>
            <person name="Shiba T."/>
            <person name="Hattori M."/>
            <person name="Ogasawara N."/>
            <person name="Hayashi H."/>
            <person name="Hiramatsu K."/>
        </authorList>
    </citation>
    <scope>NUCLEOTIDE SEQUENCE [LARGE SCALE GENOMIC DNA]</scope>
    <source>
        <strain>N315</strain>
    </source>
</reference>
<reference key="2">
    <citation type="journal article" date="2005" name="J. Microbiol. Methods">
        <title>Correlation of proteomic and transcriptomic profiles of Staphylococcus aureus during the post-exponential phase of growth.</title>
        <authorList>
            <person name="Scherl A."/>
            <person name="Francois P."/>
            <person name="Bento M."/>
            <person name="Deshusses J.M."/>
            <person name="Charbonnier Y."/>
            <person name="Converset V."/>
            <person name="Huyghe A."/>
            <person name="Walter N."/>
            <person name="Hoogland C."/>
            <person name="Appel R.D."/>
            <person name="Sanchez J.-C."/>
            <person name="Zimmermann-Ivol C.G."/>
            <person name="Corthals G.L."/>
            <person name="Hochstrasser D.F."/>
            <person name="Schrenzel J."/>
        </authorList>
    </citation>
    <scope>IDENTIFICATION BY MASS SPECTROMETRY</scope>
    <source>
        <strain>N315</strain>
    </source>
</reference>
<reference key="3">
    <citation type="submission" date="2007-10" db="UniProtKB">
        <title>Shotgun proteomic analysis of total and membrane protein extracts of S. aureus strain N315.</title>
        <authorList>
            <person name="Vaezzadeh A.R."/>
            <person name="Deshusses J."/>
            <person name="Lescuyer P."/>
            <person name="Hochstrasser D.F."/>
        </authorList>
    </citation>
    <scope>IDENTIFICATION BY MASS SPECTROMETRY [LARGE SCALE ANALYSIS]</scope>
    <source>
        <strain>N315</strain>
    </source>
</reference>
<accession>P99118</accession>
<accession>Q99WJ7</accession>
<proteinExistence type="evidence at protein level"/>
<keyword id="KW-1015">Disulfide bond</keyword>
<keyword id="KW-0274">FAD</keyword>
<keyword id="KW-0285">Flavoprotein</keyword>
<keyword id="KW-0520">NAD</keyword>
<keyword id="KW-0521">NADP</keyword>
<keyword id="KW-0560">Oxidoreductase</keyword>
<keyword id="KW-0676">Redox-active center</keyword>
<comment type="function">
    <text evidence="1">Serves to protect the cell against DNA damage by alkyl hydroperoxides. It can use either NADH or NADPH as electron donor for direct reduction of redox dyes or of alkyl hydroperoxides when combined with the AhpC protein (By similarity).</text>
</comment>
<comment type="cofactor">
    <cofactor evidence="1">
        <name>FAD</name>
        <dbReference type="ChEBI" id="CHEBI:57692"/>
    </cofactor>
    <text evidence="1">Binds 1 FAD per subunit.</text>
</comment>
<comment type="subunit">
    <text evidence="1">Homodimer.</text>
</comment>
<comment type="miscellaneous">
    <text>The active site is a redox-active disulfide bond.</text>
</comment>
<comment type="similarity">
    <text evidence="2">Belongs to the class-II pyridine nucleotide-disulfide oxidoreductase family.</text>
</comment>
<protein>
    <recommendedName>
        <fullName>Alkyl hydroperoxide reductase subunit F</fullName>
        <ecNumber>1.8.1.-</ecNumber>
    </recommendedName>
</protein>
<gene>
    <name type="primary">ahpF</name>
    <name type="ordered locus">SA0365</name>
</gene>
<dbReference type="EC" id="1.8.1.-"/>
<dbReference type="EMBL" id="BA000018">
    <property type="protein sequence ID" value="BAB41592.1"/>
    <property type="molecule type" value="Genomic_DNA"/>
</dbReference>
<dbReference type="PIR" id="E89804">
    <property type="entry name" value="E89804"/>
</dbReference>
<dbReference type="RefSeq" id="WP_000930514.1">
    <property type="nucleotide sequence ID" value="NC_002745.2"/>
</dbReference>
<dbReference type="SMR" id="P99118"/>
<dbReference type="EnsemblBacteria" id="BAB41592">
    <property type="protein sequence ID" value="BAB41592"/>
    <property type="gene ID" value="BAB41592"/>
</dbReference>
<dbReference type="KEGG" id="sau:SA0365"/>
<dbReference type="HOGENOM" id="CLU_031864_4_2_9"/>
<dbReference type="GO" id="GO:0050660">
    <property type="term" value="F:flavin adenine dinucleotide binding"/>
    <property type="evidence" value="ECO:0007669"/>
    <property type="project" value="InterPro"/>
</dbReference>
<dbReference type="GO" id="GO:0051287">
    <property type="term" value="F:NAD binding"/>
    <property type="evidence" value="ECO:0007669"/>
    <property type="project" value="InterPro"/>
</dbReference>
<dbReference type="GO" id="GO:0102039">
    <property type="term" value="F:NADH-dependent peroxiredoxin activity"/>
    <property type="evidence" value="ECO:0007669"/>
    <property type="project" value="InterPro"/>
</dbReference>
<dbReference type="GO" id="GO:0016668">
    <property type="term" value="F:oxidoreductase activity, acting on a sulfur group of donors, NAD(P) as acceptor"/>
    <property type="evidence" value="ECO:0007669"/>
    <property type="project" value="UniProtKB-ARBA"/>
</dbReference>
<dbReference type="GO" id="GO:0000302">
    <property type="term" value="P:response to reactive oxygen species"/>
    <property type="evidence" value="ECO:0007669"/>
    <property type="project" value="InterPro"/>
</dbReference>
<dbReference type="CDD" id="cd03026">
    <property type="entry name" value="AhpF_NTD_C"/>
    <property type="match status" value="1"/>
</dbReference>
<dbReference type="CDD" id="cd02974">
    <property type="entry name" value="AhpF_NTD_N"/>
    <property type="match status" value="1"/>
</dbReference>
<dbReference type="FunFam" id="3.50.50.60:FF:000007">
    <property type="entry name" value="Alkyl hydroperoxide reductase, F subunit"/>
    <property type="match status" value="1"/>
</dbReference>
<dbReference type="Gene3D" id="3.40.30.80">
    <property type="match status" value="1"/>
</dbReference>
<dbReference type="Gene3D" id="3.50.50.60">
    <property type="entry name" value="FAD/NAD(P)-binding domain"/>
    <property type="match status" value="2"/>
</dbReference>
<dbReference type="InterPro" id="IPR044141">
    <property type="entry name" value="AhpF_NTD_C"/>
</dbReference>
<dbReference type="InterPro" id="IPR044142">
    <property type="entry name" value="AhpF_NTD_N"/>
</dbReference>
<dbReference type="InterPro" id="IPR012081">
    <property type="entry name" value="Alkyl_hydroperoxide_Rdtase_suF"/>
</dbReference>
<dbReference type="InterPro" id="IPR036188">
    <property type="entry name" value="FAD/NAD-bd_sf"/>
</dbReference>
<dbReference type="InterPro" id="IPR023753">
    <property type="entry name" value="FAD/NAD-binding_dom"/>
</dbReference>
<dbReference type="InterPro" id="IPR050097">
    <property type="entry name" value="Ferredoxin-NADP_redctase_2"/>
</dbReference>
<dbReference type="InterPro" id="IPR008255">
    <property type="entry name" value="Pyr_nucl-diS_OxRdtase_2_AS"/>
</dbReference>
<dbReference type="InterPro" id="IPR012336">
    <property type="entry name" value="Thioredoxin-like_fold"/>
</dbReference>
<dbReference type="InterPro" id="IPR036249">
    <property type="entry name" value="Thioredoxin-like_sf"/>
</dbReference>
<dbReference type="NCBIfam" id="TIGR03140">
    <property type="entry name" value="AhpF"/>
    <property type="match status" value="1"/>
</dbReference>
<dbReference type="PANTHER" id="PTHR48105">
    <property type="entry name" value="THIOREDOXIN REDUCTASE 1-RELATED-RELATED"/>
    <property type="match status" value="1"/>
</dbReference>
<dbReference type="Pfam" id="PF07992">
    <property type="entry name" value="Pyr_redox_2"/>
    <property type="match status" value="1"/>
</dbReference>
<dbReference type="Pfam" id="PF13192">
    <property type="entry name" value="Thioredoxin_3"/>
    <property type="match status" value="1"/>
</dbReference>
<dbReference type="PIRSF" id="PIRSF000238">
    <property type="entry name" value="AhpF"/>
    <property type="match status" value="1"/>
</dbReference>
<dbReference type="PRINTS" id="PR00368">
    <property type="entry name" value="FADPNR"/>
</dbReference>
<dbReference type="PRINTS" id="PR00469">
    <property type="entry name" value="PNDRDTASEII"/>
</dbReference>
<dbReference type="SUPFAM" id="SSF51905">
    <property type="entry name" value="FAD/NAD(P)-binding domain"/>
    <property type="match status" value="1"/>
</dbReference>
<dbReference type="SUPFAM" id="SSF52833">
    <property type="entry name" value="Thioredoxin-like"/>
    <property type="match status" value="2"/>
</dbReference>
<dbReference type="PROSITE" id="PS51354">
    <property type="entry name" value="GLUTAREDOXIN_2"/>
    <property type="match status" value="1"/>
</dbReference>
<dbReference type="PROSITE" id="PS00573">
    <property type="entry name" value="PYRIDINE_REDOX_2"/>
    <property type="match status" value="1"/>
</dbReference>
<sequence>MLNADLKQQLKQLLELMEGNVEFVASLGSDEKSKELKELLTEISDMSPRLSLSEKSLKRTPSFSVNRPGEETGVTFAGIPLGHEFNSLVLAILQVSGRAPKEKQSIIDQIKNLEGSFHFETFISLTCQKCPDVVQALNLMSVINPNITHSMIDGAVFREESENIMAVPAVFLNGEEFGNGRMTIQDILSKLGSTADASEFENKEPYDVLIVGGGPASGSAAIYTARKGLRTGIVADRIGGQVNDTAGIENFITVKETTGSEFSSNLAAHIDQYDIDAMTGIRATDIEKTDEAIKVTLENGAVLESKTVIIATGAGWRKLNIPGEEQLINKGVAFCPHCDGPLFENKDVAVIGGGNSGVEAAIDLAGIVNHVTLFEFASELKADNVLQDRLRSLSNVDIKTNAKTTEVVGEDHVTGIRYEDMSTGEEHLLNLDGIFVQIGLLPNTSWLKDAVELNERGEIVIDRNNNTNVPGIFAAGDVTDQKNKQIIISMGAGANAALNAFDYIIRN</sequence>
<name>AHPF_STAAN</name>
<evidence type="ECO:0000250" key="1"/>
<evidence type="ECO:0000305" key="2"/>